<evidence type="ECO:0000250" key="1"/>
<evidence type="ECO:0000250" key="2">
    <source>
        <dbReference type="UniProtKB" id="P60615"/>
    </source>
</evidence>
<evidence type="ECO:0000305" key="3"/>
<sequence>MKTLLLTLVVVTIVCLDLGYTRRCFITPDVRSERCPPGQEVCYTKTWCDGFCGSRGKRVDLGCAATCPTPKKKGIDIICCSKDNCNTFPKWP</sequence>
<proteinExistence type="inferred from homology"/>
<protein>
    <recommendedName>
        <fullName>Long neurotoxin 3FTx-Oxy1</fullName>
    </recommendedName>
</protein>
<dbReference type="EMBL" id="EU029749">
    <property type="protein sequence ID" value="ABU68549.1"/>
    <property type="molecule type" value="mRNA"/>
</dbReference>
<dbReference type="SMR" id="A7X4Q3"/>
<dbReference type="GO" id="GO:0005576">
    <property type="term" value="C:extracellular region"/>
    <property type="evidence" value="ECO:0007669"/>
    <property type="project" value="UniProtKB-SubCell"/>
</dbReference>
<dbReference type="GO" id="GO:0030550">
    <property type="term" value="F:acetylcholine receptor inhibitor activity"/>
    <property type="evidence" value="ECO:0007669"/>
    <property type="project" value="UniProtKB-KW"/>
</dbReference>
<dbReference type="GO" id="GO:0099106">
    <property type="term" value="F:ion channel regulator activity"/>
    <property type="evidence" value="ECO:0007669"/>
    <property type="project" value="UniProtKB-KW"/>
</dbReference>
<dbReference type="GO" id="GO:0090729">
    <property type="term" value="F:toxin activity"/>
    <property type="evidence" value="ECO:0007669"/>
    <property type="project" value="UniProtKB-KW"/>
</dbReference>
<dbReference type="CDD" id="cd00206">
    <property type="entry name" value="TFP_snake_toxin"/>
    <property type="match status" value="1"/>
</dbReference>
<dbReference type="Gene3D" id="2.10.60.10">
    <property type="entry name" value="CD59"/>
    <property type="match status" value="1"/>
</dbReference>
<dbReference type="InterPro" id="IPR003571">
    <property type="entry name" value="Snake_3FTx"/>
</dbReference>
<dbReference type="InterPro" id="IPR045860">
    <property type="entry name" value="Snake_toxin-like_sf"/>
</dbReference>
<dbReference type="InterPro" id="IPR018354">
    <property type="entry name" value="Snake_toxin_con_site"/>
</dbReference>
<dbReference type="InterPro" id="IPR054131">
    <property type="entry name" value="Toxin_cobra-type"/>
</dbReference>
<dbReference type="Pfam" id="PF21947">
    <property type="entry name" value="Toxin_cobra-type"/>
    <property type="match status" value="1"/>
</dbReference>
<dbReference type="SUPFAM" id="SSF57302">
    <property type="entry name" value="Snake toxin-like"/>
    <property type="match status" value="1"/>
</dbReference>
<dbReference type="PROSITE" id="PS00272">
    <property type="entry name" value="SNAKE_TOXIN"/>
    <property type="match status" value="1"/>
</dbReference>
<feature type="signal peptide" evidence="1">
    <location>
        <begin position="1"/>
        <end position="21"/>
    </location>
</feature>
<feature type="chain" id="PRO_0000316167" description="Long neurotoxin 3FTx-Oxy1">
    <location>
        <begin position="22"/>
        <end position="92"/>
    </location>
</feature>
<feature type="disulfide bond" evidence="1">
    <location>
        <begin position="24"/>
        <end position="42"/>
    </location>
</feature>
<feature type="disulfide bond" evidence="1">
    <location>
        <begin position="35"/>
        <end position="63"/>
    </location>
</feature>
<feature type="disulfide bond" evidence="1">
    <location>
        <begin position="48"/>
        <end position="52"/>
    </location>
</feature>
<feature type="disulfide bond" evidence="1">
    <location>
        <begin position="67"/>
        <end position="79"/>
    </location>
</feature>
<feature type="disulfide bond" evidence="1">
    <location>
        <begin position="80"/>
        <end position="85"/>
    </location>
</feature>
<comment type="function">
    <text evidence="2">Binds with high affinity to muscular (alpha-1/CHRNA1) and neuronal (alpha-7/CHRNA7) nicotinic acetylcholine receptor (nAChR) and inhibits acetylcholine from binding to the receptor, thereby impairing neuromuscular and neuronal transmission.</text>
</comment>
<comment type="subcellular location">
    <subcellularLocation>
        <location evidence="1">Secreted</location>
    </subcellularLocation>
</comment>
<comment type="tissue specificity">
    <text evidence="3">Expressed by the venom gland.</text>
</comment>
<comment type="similarity">
    <text evidence="3">Belongs to the three-finger toxin family. Long-chain subfamily. Type II alpha-neurotoxin sub-subfamily.</text>
</comment>
<name>3L2O1_OXYMI</name>
<accession>A7X4Q3</accession>
<keyword id="KW-0008">Acetylcholine receptor inhibiting toxin</keyword>
<keyword id="KW-1015">Disulfide bond</keyword>
<keyword id="KW-0872">Ion channel impairing toxin</keyword>
<keyword id="KW-0528">Neurotoxin</keyword>
<keyword id="KW-0629">Postsynaptic neurotoxin</keyword>
<keyword id="KW-0964">Secreted</keyword>
<keyword id="KW-0732">Signal</keyword>
<keyword id="KW-0800">Toxin</keyword>
<organism>
    <name type="scientific">Oxyuranus microlepidotus</name>
    <name type="common">Inland taipan</name>
    <name type="synonym">Diemenia microlepidota</name>
    <dbReference type="NCBI Taxonomy" id="111177"/>
    <lineage>
        <taxon>Eukaryota</taxon>
        <taxon>Metazoa</taxon>
        <taxon>Chordata</taxon>
        <taxon>Craniata</taxon>
        <taxon>Vertebrata</taxon>
        <taxon>Euteleostomi</taxon>
        <taxon>Lepidosauria</taxon>
        <taxon>Squamata</taxon>
        <taxon>Bifurcata</taxon>
        <taxon>Unidentata</taxon>
        <taxon>Episquamata</taxon>
        <taxon>Toxicofera</taxon>
        <taxon>Serpentes</taxon>
        <taxon>Colubroidea</taxon>
        <taxon>Elapidae</taxon>
        <taxon>Hydrophiinae</taxon>
        <taxon>Oxyuranus</taxon>
    </lineage>
</organism>
<reference key="1">
    <citation type="journal article" date="2008" name="Mol. Cell. Proteomics">
        <title>Evolution of an arsenal: structural and functional diversification of the venom system in the advanced snakes (Caenophidia).</title>
        <authorList>
            <person name="Fry B.G."/>
            <person name="Scheib H."/>
            <person name="van der Weerd L."/>
            <person name="Young B."/>
            <person name="McNaughtan J."/>
            <person name="Ramjan S.F.R."/>
            <person name="Vidal N."/>
            <person name="Poelmann R.E."/>
            <person name="Norman J.A."/>
        </authorList>
    </citation>
    <scope>NUCLEOTIDE SEQUENCE [LARGE SCALE MRNA]</scope>
    <source>
        <tissue>Venom gland</tissue>
    </source>
</reference>